<gene>
    <name evidence="1" type="primary">pth</name>
    <name type="ordered locus">LMOf2365_0224</name>
</gene>
<comment type="function">
    <text evidence="1">Hydrolyzes ribosome-free peptidyl-tRNAs (with 1 or more amino acids incorporated), which drop off the ribosome during protein synthesis, or as a result of ribosome stalling.</text>
</comment>
<comment type="function">
    <text evidence="1">Catalyzes the release of premature peptidyl moieties from peptidyl-tRNA molecules trapped in stalled 50S ribosomal subunits, and thus maintains levels of free tRNAs and 50S ribosomes.</text>
</comment>
<comment type="catalytic activity">
    <reaction evidence="1">
        <text>an N-acyl-L-alpha-aminoacyl-tRNA + H2O = an N-acyl-L-amino acid + a tRNA + H(+)</text>
        <dbReference type="Rhea" id="RHEA:54448"/>
        <dbReference type="Rhea" id="RHEA-COMP:10123"/>
        <dbReference type="Rhea" id="RHEA-COMP:13883"/>
        <dbReference type="ChEBI" id="CHEBI:15377"/>
        <dbReference type="ChEBI" id="CHEBI:15378"/>
        <dbReference type="ChEBI" id="CHEBI:59874"/>
        <dbReference type="ChEBI" id="CHEBI:78442"/>
        <dbReference type="ChEBI" id="CHEBI:138191"/>
        <dbReference type="EC" id="3.1.1.29"/>
    </reaction>
</comment>
<comment type="subunit">
    <text evidence="1">Monomer.</text>
</comment>
<comment type="subcellular location">
    <subcellularLocation>
        <location evidence="1">Cytoplasm</location>
    </subcellularLocation>
</comment>
<comment type="similarity">
    <text evidence="1">Belongs to the PTH family.</text>
</comment>
<accession>Q724K0</accession>
<keyword id="KW-0963">Cytoplasm</keyword>
<keyword id="KW-0378">Hydrolase</keyword>
<keyword id="KW-0694">RNA-binding</keyword>
<keyword id="KW-0820">tRNA-binding</keyword>
<evidence type="ECO:0000255" key="1">
    <source>
        <dbReference type="HAMAP-Rule" id="MF_00083"/>
    </source>
</evidence>
<reference key="1">
    <citation type="journal article" date="2004" name="Nucleic Acids Res.">
        <title>Whole genome comparisons of serotype 4b and 1/2a strains of the food-borne pathogen Listeria monocytogenes reveal new insights into the core genome components of this species.</title>
        <authorList>
            <person name="Nelson K.E."/>
            <person name="Fouts D.E."/>
            <person name="Mongodin E.F."/>
            <person name="Ravel J."/>
            <person name="DeBoy R.T."/>
            <person name="Kolonay J.F."/>
            <person name="Rasko D.A."/>
            <person name="Angiuoli S.V."/>
            <person name="Gill S.R."/>
            <person name="Paulsen I.T."/>
            <person name="Peterson J.D."/>
            <person name="White O."/>
            <person name="Nelson W.C."/>
            <person name="Nierman W.C."/>
            <person name="Beanan M.J."/>
            <person name="Brinkac L.M."/>
            <person name="Daugherty S.C."/>
            <person name="Dodson R.J."/>
            <person name="Durkin A.S."/>
            <person name="Madupu R."/>
            <person name="Haft D.H."/>
            <person name="Selengut J."/>
            <person name="Van Aken S.E."/>
            <person name="Khouri H.M."/>
            <person name="Fedorova N."/>
            <person name="Forberger H.A."/>
            <person name="Tran B."/>
            <person name="Kathariou S."/>
            <person name="Wonderling L.D."/>
            <person name="Uhlich G.A."/>
            <person name="Bayles D.O."/>
            <person name="Luchansky J.B."/>
            <person name="Fraser C.M."/>
        </authorList>
    </citation>
    <scope>NUCLEOTIDE SEQUENCE [LARGE SCALE GENOMIC DNA]</scope>
    <source>
        <strain>F2365</strain>
    </source>
</reference>
<feature type="chain" id="PRO_0000187764" description="Peptidyl-tRNA hydrolase">
    <location>
        <begin position="1"/>
        <end position="186"/>
    </location>
</feature>
<feature type="active site" description="Proton acceptor" evidence="1">
    <location>
        <position position="19"/>
    </location>
</feature>
<feature type="binding site" evidence="1">
    <location>
        <position position="14"/>
    </location>
    <ligand>
        <name>tRNA</name>
        <dbReference type="ChEBI" id="CHEBI:17843"/>
    </ligand>
</feature>
<feature type="binding site" evidence="1">
    <location>
        <position position="64"/>
    </location>
    <ligand>
        <name>tRNA</name>
        <dbReference type="ChEBI" id="CHEBI:17843"/>
    </ligand>
</feature>
<feature type="binding site" evidence="1">
    <location>
        <position position="66"/>
    </location>
    <ligand>
        <name>tRNA</name>
        <dbReference type="ChEBI" id="CHEBI:17843"/>
    </ligand>
</feature>
<feature type="binding site" evidence="1">
    <location>
        <position position="112"/>
    </location>
    <ligand>
        <name>tRNA</name>
        <dbReference type="ChEBI" id="CHEBI:17843"/>
    </ligand>
</feature>
<feature type="site" description="Discriminates between blocked and unblocked aminoacyl-tRNA" evidence="1">
    <location>
        <position position="9"/>
    </location>
</feature>
<feature type="site" description="Stabilizes the basic form of H active site to accept a proton" evidence="1">
    <location>
        <position position="91"/>
    </location>
</feature>
<sequence>MKLIAGLGNPGKKYERTRHNVGFMVVDELSFRHQTPWKKSKFNGMTSEIIVGGEKMILVKPLTFMNASGECIRPLMDYYNIPIEDVVIVYDDLDLPVGKIRLRQKGSAGGHNGMKSIIQHVKTQEFNRIRVGVSRPLKGEVIHYVLGDFPKAEQPDIIAAIQKSADAIEDFAQTPFIEVMNKYNQK</sequence>
<proteinExistence type="inferred from homology"/>
<protein>
    <recommendedName>
        <fullName evidence="1">Peptidyl-tRNA hydrolase</fullName>
        <shortName evidence="1">Pth</shortName>
        <ecNumber evidence="1">3.1.1.29</ecNumber>
    </recommendedName>
</protein>
<organism>
    <name type="scientific">Listeria monocytogenes serotype 4b (strain F2365)</name>
    <dbReference type="NCBI Taxonomy" id="265669"/>
    <lineage>
        <taxon>Bacteria</taxon>
        <taxon>Bacillati</taxon>
        <taxon>Bacillota</taxon>
        <taxon>Bacilli</taxon>
        <taxon>Bacillales</taxon>
        <taxon>Listeriaceae</taxon>
        <taxon>Listeria</taxon>
    </lineage>
</organism>
<name>PTH_LISMF</name>
<dbReference type="EC" id="3.1.1.29" evidence="1"/>
<dbReference type="EMBL" id="AE017262">
    <property type="protein sequence ID" value="AAT03011.1"/>
    <property type="molecule type" value="Genomic_DNA"/>
</dbReference>
<dbReference type="RefSeq" id="WP_003725738.1">
    <property type="nucleotide sequence ID" value="NC_002973.6"/>
</dbReference>
<dbReference type="SMR" id="Q724K0"/>
<dbReference type="KEGG" id="lmf:LMOf2365_0224"/>
<dbReference type="HOGENOM" id="CLU_062456_4_1_9"/>
<dbReference type="GO" id="GO:0005737">
    <property type="term" value="C:cytoplasm"/>
    <property type="evidence" value="ECO:0007669"/>
    <property type="project" value="UniProtKB-SubCell"/>
</dbReference>
<dbReference type="GO" id="GO:0004045">
    <property type="term" value="F:peptidyl-tRNA hydrolase activity"/>
    <property type="evidence" value="ECO:0007669"/>
    <property type="project" value="UniProtKB-UniRule"/>
</dbReference>
<dbReference type="GO" id="GO:0000049">
    <property type="term" value="F:tRNA binding"/>
    <property type="evidence" value="ECO:0007669"/>
    <property type="project" value="UniProtKB-UniRule"/>
</dbReference>
<dbReference type="GO" id="GO:0006515">
    <property type="term" value="P:protein quality control for misfolded or incompletely synthesized proteins"/>
    <property type="evidence" value="ECO:0007669"/>
    <property type="project" value="UniProtKB-UniRule"/>
</dbReference>
<dbReference type="GO" id="GO:0072344">
    <property type="term" value="P:rescue of stalled ribosome"/>
    <property type="evidence" value="ECO:0007669"/>
    <property type="project" value="UniProtKB-UniRule"/>
</dbReference>
<dbReference type="CDD" id="cd00462">
    <property type="entry name" value="PTH"/>
    <property type="match status" value="1"/>
</dbReference>
<dbReference type="FunFam" id="3.40.50.1470:FF:000001">
    <property type="entry name" value="Peptidyl-tRNA hydrolase"/>
    <property type="match status" value="1"/>
</dbReference>
<dbReference type="Gene3D" id="3.40.50.1470">
    <property type="entry name" value="Peptidyl-tRNA hydrolase"/>
    <property type="match status" value="1"/>
</dbReference>
<dbReference type="HAMAP" id="MF_00083">
    <property type="entry name" value="Pept_tRNA_hydro_bact"/>
    <property type="match status" value="1"/>
</dbReference>
<dbReference type="InterPro" id="IPR001328">
    <property type="entry name" value="Pept_tRNA_hydro"/>
</dbReference>
<dbReference type="InterPro" id="IPR018171">
    <property type="entry name" value="Pept_tRNA_hydro_CS"/>
</dbReference>
<dbReference type="InterPro" id="IPR036416">
    <property type="entry name" value="Pept_tRNA_hydro_sf"/>
</dbReference>
<dbReference type="NCBIfam" id="TIGR00447">
    <property type="entry name" value="pth"/>
    <property type="match status" value="1"/>
</dbReference>
<dbReference type="PANTHER" id="PTHR17224">
    <property type="entry name" value="PEPTIDYL-TRNA HYDROLASE"/>
    <property type="match status" value="1"/>
</dbReference>
<dbReference type="PANTHER" id="PTHR17224:SF1">
    <property type="entry name" value="PEPTIDYL-TRNA HYDROLASE"/>
    <property type="match status" value="1"/>
</dbReference>
<dbReference type="Pfam" id="PF01195">
    <property type="entry name" value="Pept_tRNA_hydro"/>
    <property type="match status" value="1"/>
</dbReference>
<dbReference type="SUPFAM" id="SSF53178">
    <property type="entry name" value="Peptidyl-tRNA hydrolase-like"/>
    <property type="match status" value="1"/>
</dbReference>
<dbReference type="PROSITE" id="PS01195">
    <property type="entry name" value="PEPT_TRNA_HYDROL_1"/>
    <property type="match status" value="1"/>
</dbReference>
<dbReference type="PROSITE" id="PS01196">
    <property type="entry name" value="PEPT_TRNA_HYDROL_2"/>
    <property type="match status" value="1"/>
</dbReference>